<comment type="function">
    <text evidence="1">Removes the formyl group from the N-terminal Met of newly synthesized proteins. Requires at least a dipeptide for an efficient rate of reaction. N-terminal L-methionine is a prerequisite for activity but the enzyme has broad specificity at other positions.</text>
</comment>
<comment type="catalytic activity">
    <reaction evidence="1">
        <text>N-terminal N-formyl-L-methionyl-[peptide] + H2O = N-terminal L-methionyl-[peptide] + formate</text>
        <dbReference type="Rhea" id="RHEA:24420"/>
        <dbReference type="Rhea" id="RHEA-COMP:10639"/>
        <dbReference type="Rhea" id="RHEA-COMP:10640"/>
        <dbReference type="ChEBI" id="CHEBI:15377"/>
        <dbReference type="ChEBI" id="CHEBI:15740"/>
        <dbReference type="ChEBI" id="CHEBI:49298"/>
        <dbReference type="ChEBI" id="CHEBI:64731"/>
        <dbReference type="EC" id="3.5.1.88"/>
    </reaction>
</comment>
<comment type="cofactor">
    <cofactor evidence="1">
        <name>Fe(2+)</name>
        <dbReference type="ChEBI" id="CHEBI:29033"/>
    </cofactor>
    <text evidence="1">Binds 1 Fe(2+) ion.</text>
</comment>
<comment type="similarity">
    <text evidence="1">Belongs to the polypeptide deformylase family.</text>
</comment>
<proteinExistence type="inferred from homology"/>
<feature type="chain" id="PRO_1000097356" description="Peptide deformylase">
    <location>
        <begin position="1"/>
        <end position="165"/>
    </location>
</feature>
<feature type="active site" evidence="1">
    <location>
        <position position="136"/>
    </location>
</feature>
<feature type="binding site" evidence="1">
    <location>
        <position position="93"/>
    </location>
    <ligand>
        <name>Fe cation</name>
        <dbReference type="ChEBI" id="CHEBI:24875"/>
    </ligand>
</feature>
<feature type="binding site" evidence="1">
    <location>
        <position position="135"/>
    </location>
    <ligand>
        <name>Fe cation</name>
        <dbReference type="ChEBI" id="CHEBI:24875"/>
    </ligand>
</feature>
<feature type="binding site" evidence="1">
    <location>
        <position position="139"/>
    </location>
    <ligand>
        <name>Fe cation</name>
        <dbReference type="ChEBI" id="CHEBI:24875"/>
    </ligand>
</feature>
<protein>
    <recommendedName>
        <fullName evidence="1">Peptide deformylase</fullName>
        <shortName evidence="1">PDF</shortName>
        <ecNumber evidence="1">3.5.1.88</ecNumber>
    </recommendedName>
    <alternativeName>
        <fullName evidence="1">Polypeptide deformylase</fullName>
    </alternativeName>
</protein>
<reference key="1">
    <citation type="submission" date="2008-08" db="EMBL/GenBank/DDBJ databases">
        <title>The complete genome sequence of Thermodesulfovibrio yellowstonii strain ATCC 51303 / DSM 11347 / YP87.</title>
        <authorList>
            <person name="Dodson R.J."/>
            <person name="Durkin A.S."/>
            <person name="Wu M."/>
            <person name="Eisen J."/>
            <person name="Sutton G."/>
        </authorList>
    </citation>
    <scope>NUCLEOTIDE SEQUENCE [LARGE SCALE GENOMIC DNA]</scope>
    <source>
        <strain>ATCC 51303 / DSM 11347 / YP87</strain>
    </source>
</reference>
<evidence type="ECO:0000255" key="1">
    <source>
        <dbReference type="HAMAP-Rule" id="MF_00163"/>
    </source>
</evidence>
<dbReference type="EC" id="3.5.1.88" evidence="1"/>
<dbReference type="EMBL" id="CP001147">
    <property type="protein sequence ID" value="ACI20745.1"/>
    <property type="molecule type" value="Genomic_DNA"/>
</dbReference>
<dbReference type="RefSeq" id="WP_012545479.1">
    <property type="nucleotide sequence ID" value="NC_011296.1"/>
</dbReference>
<dbReference type="RefSeq" id="YP_002248176.1">
    <property type="nucleotide sequence ID" value="NC_011296.1"/>
</dbReference>
<dbReference type="SMR" id="B5YIL7"/>
<dbReference type="FunCoup" id="B5YIL7">
    <property type="interactions" value="428"/>
</dbReference>
<dbReference type="STRING" id="289376.THEYE_A0329"/>
<dbReference type="EnsemblBacteria" id="ACI20745">
    <property type="protein sequence ID" value="ACI20745"/>
    <property type="gene ID" value="THEYE_A0329"/>
</dbReference>
<dbReference type="KEGG" id="tye:THEYE_A0329"/>
<dbReference type="PATRIC" id="fig|289376.4.peg.322"/>
<dbReference type="eggNOG" id="COG0242">
    <property type="taxonomic scope" value="Bacteria"/>
</dbReference>
<dbReference type="HOGENOM" id="CLU_061901_2_1_0"/>
<dbReference type="InParanoid" id="B5YIL7"/>
<dbReference type="OrthoDB" id="9804313at2"/>
<dbReference type="Proteomes" id="UP000000718">
    <property type="component" value="Chromosome"/>
</dbReference>
<dbReference type="GO" id="GO:0046872">
    <property type="term" value="F:metal ion binding"/>
    <property type="evidence" value="ECO:0007669"/>
    <property type="project" value="UniProtKB-KW"/>
</dbReference>
<dbReference type="GO" id="GO:0042586">
    <property type="term" value="F:peptide deformylase activity"/>
    <property type="evidence" value="ECO:0000318"/>
    <property type="project" value="GO_Central"/>
</dbReference>
<dbReference type="GO" id="GO:0043686">
    <property type="term" value="P:co-translational protein modification"/>
    <property type="evidence" value="ECO:0000318"/>
    <property type="project" value="GO_Central"/>
</dbReference>
<dbReference type="GO" id="GO:0006412">
    <property type="term" value="P:translation"/>
    <property type="evidence" value="ECO:0007669"/>
    <property type="project" value="UniProtKB-UniRule"/>
</dbReference>
<dbReference type="CDD" id="cd00487">
    <property type="entry name" value="Pep_deformylase"/>
    <property type="match status" value="1"/>
</dbReference>
<dbReference type="FunFam" id="3.90.45.10:FF:000005">
    <property type="entry name" value="Peptide deformylase"/>
    <property type="match status" value="1"/>
</dbReference>
<dbReference type="Gene3D" id="3.90.45.10">
    <property type="entry name" value="Peptide deformylase"/>
    <property type="match status" value="1"/>
</dbReference>
<dbReference type="HAMAP" id="MF_00163">
    <property type="entry name" value="Pep_deformylase"/>
    <property type="match status" value="1"/>
</dbReference>
<dbReference type="InterPro" id="IPR023635">
    <property type="entry name" value="Peptide_deformylase"/>
</dbReference>
<dbReference type="InterPro" id="IPR036821">
    <property type="entry name" value="Peptide_deformylase_sf"/>
</dbReference>
<dbReference type="NCBIfam" id="TIGR00079">
    <property type="entry name" value="pept_deformyl"/>
    <property type="match status" value="1"/>
</dbReference>
<dbReference type="NCBIfam" id="NF001159">
    <property type="entry name" value="PRK00150.1-3"/>
    <property type="match status" value="1"/>
</dbReference>
<dbReference type="PANTHER" id="PTHR10458">
    <property type="entry name" value="PEPTIDE DEFORMYLASE"/>
    <property type="match status" value="1"/>
</dbReference>
<dbReference type="PANTHER" id="PTHR10458:SF22">
    <property type="entry name" value="PEPTIDE DEFORMYLASE"/>
    <property type="match status" value="1"/>
</dbReference>
<dbReference type="Pfam" id="PF01327">
    <property type="entry name" value="Pep_deformylase"/>
    <property type="match status" value="1"/>
</dbReference>
<dbReference type="PIRSF" id="PIRSF004749">
    <property type="entry name" value="Pep_def"/>
    <property type="match status" value="1"/>
</dbReference>
<dbReference type="PRINTS" id="PR01576">
    <property type="entry name" value="PDEFORMYLASE"/>
</dbReference>
<dbReference type="SUPFAM" id="SSF56420">
    <property type="entry name" value="Peptide deformylase"/>
    <property type="match status" value="1"/>
</dbReference>
<name>DEF_THEYD</name>
<gene>
    <name evidence="1" type="primary">def</name>
    <name type="ordered locus">THEYE_A0329</name>
</gene>
<sequence>MAILEIKKYPDEVLKKKAETISEINGDLQKLIDNMIETMYNANGIGLAAPQVGVLKRLIVVDTSPREQNQSLIVLINPEITDSEGEILSEEGCLSLPGFTTRLKRKERVIVKGLDRNGKEIEIEATGLLARALQHEIDHLDGILLIDKISPLKRELFRKKFKTKK</sequence>
<accession>B5YIL7</accession>
<organism>
    <name type="scientific">Thermodesulfovibrio yellowstonii (strain ATCC 51303 / DSM 11347 / YP87)</name>
    <dbReference type="NCBI Taxonomy" id="289376"/>
    <lineage>
        <taxon>Bacteria</taxon>
        <taxon>Pseudomonadati</taxon>
        <taxon>Nitrospirota</taxon>
        <taxon>Thermodesulfovibrionia</taxon>
        <taxon>Thermodesulfovibrionales</taxon>
        <taxon>Thermodesulfovibrionaceae</taxon>
        <taxon>Thermodesulfovibrio</taxon>
    </lineage>
</organism>
<keyword id="KW-0378">Hydrolase</keyword>
<keyword id="KW-0408">Iron</keyword>
<keyword id="KW-0479">Metal-binding</keyword>
<keyword id="KW-0648">Protein biosynthesis</keyword>
<keyword id="KW-1185">Reference proteome</keyword>